<dbReference type="EMBL" id="AP009384">
    <property type="protein sequence ID" value="BAF88805.1"/>
    <property type="molecule type" value="Genomic_DNA"/>
</dbReference>
<dbReference type="RefSeq" id="WP_012171331.1">
    <property type="nucleotide sequence ID" value="NC_009937.1"/>
</dbReference>
<dbReference type="SMR" id="A8I9M0"/>
<dbReference type="STRING" id="438753.AZC_2807"/>
<dbReference type="KEGG" id="azc:AZC_2807"/>
<dbReference type="eggNOG" id="COG0232">
    <property type="taxonomic scope" value="Bacteria"/>
</dbReference>
<dbReference type="HOGENOM" id="CLU_028163_1_0_5"/>
<dbReference type="Proteomes" id="UP000000270">
    <property type="component" value="Chromosome"/>
</dbReference>
<dbReference type="GO" id="GO:0008832">
    <property type="term" value="F:dGTPase activity"/>
    <property type="evidence" value="ECO:0007669"/>
    <property type="project" value="TreeGrafter"/>
</dbReference>
<dbReference type="GO" id="GO:0006203">
    <property type="term" value="P:dGTP catabolic process"/>
    <property type="evidence" value="ECO:0007669"/>
    <property type="project" value="TreeGrafter"/>
</dbReference>
<dbReference type="CDD" id="cd00077">
    <property type="entry name" value="HDc"/>
    <property type="match status" value="1"/>
</dbReference>
<dbReference type="Gene3D" id="1.10.3210.10">
    <property type="entry name" value="Hypothetical protein af1432"/>
    <property type="match status" value="1"/>
</dbReference>
<dbReference type="HAMAP" id="MF_01212">
    <property type="entry name" value="dGTPase_type2"/>
    <property type="match status" value="1"/>
</dbReference>
<dbReference type="InterPro" id="IPR006261">
    <property type="entry name" value="dGTPase"/>
</dbReference>
<dbReference type="InterPro" id="IPR050135">
    <property type="entry name" value="dGTPase-like"/>
</dbReference>
<dbReference type="InterPro" id="IPR023023">
    <property type="entry name" value="dNTPase_2"/>
</dbReference>
<dbReference type="InterPro" id="IPR003607">
    <property type="entry name" value="HD/PDEase_dom"/>
</dbReference>
<dbReference type="InterPro" id="IPR006674">
    <property type="entry name" value="HD_domain"/>
</dbReference>
<dbReference type="InterPro" id="IPR026875">
    <property type="entry name" value="PHydrolase_assoc_dom"/>
</dbReference>
<dbReference type="NCBIfam" id="TIGR01353">
    <property type="entry name" value="dGTP_triPase"/>
    <property type="match status" value="1"/>
</dbReference>
<dbReference type="NCBIfam" id="NF002326">
    <property type="entry name" value="PRK01286.1-1"/>
    <property type="match status" value="1"/>
</dbReference>
<dbReference type="NCBIfam" id="NF002328">
    <property type="entry name" value="PRK01286.1-3"/>
    <property type="match status" value="1"/>
</dbReference>
<dbReference type="PANTHER" id="PTHR11373:SF43">
    <property type="entry name" value="DEOXYGUANOSINETRIPHOSPHATE TRIPHOSPHOHYDROLASE-LIKE PROTEIN"/>
    <property type="match status" value="1"/>
</dbReference>
<dbReference type="PANTHER" id="PTHR11373">
    <property type="entry name" value="DEOXYNUCLEOSIDE TRIPHOSPHATE TRIPHOSPHOHYDROLASE"/>
    <property type="match status" value="1"/>
</dbReference>
<dbReference type="Pfam" id="PF01966">
    <property type="entry name" value="HD"/>
    <property type="match status" value="1"/>
</dbReference>
<dbReference type="Pfam" id="PF13286">
    <property type="entry name" value="HD_assoc"/>
    <property type="match status" value="1"/>
</dbReference>
<dbReference type="SMART" id="SM00471">
    <property type="entry name" value="HDc"/>
    <property type="match status" value="1"/>
</dbReference>
<dbReference type="SUPFAM" id="SSF109604">
    <property type="entry name" value="HD-domain/PDEase-like"/>
    <property type="match status" value="1"/>
</dbReference>
<dbReference type="PROSITE" id="PS51831">
    <property type="entry name" value="HD"/>
    <property type="match status" value="1"/>
</dbReference>
<feature type="chain" id="PRO_1000073112" description="Deoxyguanosinetriphosphate triphosphohydrolase-like protein">
    <location>
        <begin position="1"/>
        <end position="398"/>
    </location>
</feature>
<feature type="domain" description="HD" evidence="2">
    <location>
        <begin position="68"/>
        <end position="215"/>
    </location>
</feature>
<evidence type="ECO:0000255" key="1">
    <source>
        <dbReference type="HAMAP-Rule" id="MF_01212"/>
    </source>
</evidence>
<evidence type="ECO:0000255" key="2">
    <source>
        <dbReference type="PROSITE-ProRule" id="PRU01175"/>
    </source>
</evidence>
<comment type="similarity">
    <text evidence="1">Belongs to the dGTPase family. Type 2 subfamily.</text>
</comment>
<keyword id="KW-0378">Hydrolase</keyword>
<keyword id="KW-1185">Reference proteome</keyword>
<organism>
    <name type="scientific">Azorhizobium caulinodans (strain ATCC 43989 / DSM 5975 / JCM 20966 / LMG 6465 / NBRC 14845 / NCIMB 13405 / ORS 571)</name>
    <dbReference type="NCBI Taxonomy" id="438753"/>
    <lineage>
        <taxon>Bacteria</taxon>
        <taxon>Pseudomonadati</taxon>
        <taxon>Pseudomonadota</taxon>
        <taxon>Alphaproteobacteria</taxon>
        <taxon>Hyphomicrobiales</taxon>
        <taxon>Xanthobacteraceae</taxon>
        <taxon>Azorhizobium</taxon>
    </lineage>
</organism>
<reference key="1">
    <citation type="submission" date="2007-04" db="EMBL/GenBank/DDBJ databases">
        <title>Complete genome sequence of the nitrogen-fixing bacterium Azorhizobium caulinodans ORS571.</title>
        <authorList>
            <person name="Lee K.B."/>
            <person name="Backer P.D."/>
            <person name="Aono T."/>
            <person name="Liu C.T."/>
            <person name="Suzuki S."/>
            <person name="Suzuki T."/>
            <person name="Kaneko T."/>
            <person name="Yamada M."/>
            <person name="Tabata S."/>
            <person name="Kupfer D.M."/>
            <person name="Najar F.Z."/>
            <person name="Wiley G.B."/>
            <person name="Roe B."/>
            <person name="Binnewies T."/>
            <person name="Ussery D."/>
            <person name="Vereecke D."/>
            <person name="Gevers D."/>
            <person name="Holsters M."/>
            <person name="Oyaizu H."/>
        </authorList>
    </citation>
    <scope>NUCLEOTIDE SEQUENCE [LARGE SCALE GENOMIC DNA]</scope>
    <source>
        <strain>ATCC 43989 / DSM 5975 / JCM 20966 / LMG 6465 / NBRC 14845 / NCIMB 13405 / ORS 571</strain>
    </source>
</reference>
<name>DGTL1_AZOC5</name>
<gene>
    <name type="ordered locus">AZC_2807</name>
</gene>
<protein>
    <recommendedName>
        <fullName evidence="1">Deoxyguanosinetriphosphate triphosphohydrolase-like protein</fullName>
    </recommendedName>
</protein>
<proteinExistence type="inferred from homology"/>
<sequence length="398" mass="44429">MAVSGARPRMTWACDPVWTRGRLVPEQEGTRSAFRRDCDRIIHSTAFRRLKHKTQVFVFHEGDHYRTRLTHTLEVAQIARSIARALGLDEDLAEALALAHDLGHPPFAHAGERALDACMADYGGFDHNAQSLRVVTRLERRYAGFDGLNLTWETLEGIAKHNGPLTDRSGKPLGAAGDVLPHAIVAHSAVQDLELWTHAGPEAQVAAISDDIAYDVHDLDDGLRAGLFHLDELEALPLVGAVLAEVRASWPSLETGRVIHEVMRRLITRFVEDVVRETETRARAAKVRSSFDVRMAGAPLVAFSAGMRTAEAAVKGFLFPHMYRHARVNRIMDEAQGVVRDLFALFMARPQEMPADWQLEGAPPERMARRVADYIAGMTDRYALDQHARFFDTTPELR</sequence>
<accession>A8I9M0</accession>